<gene>
    <name type="primary">vif</name>
</gene>
<accession>P05904</accession>
<sequence>MNPNKEWVMRVTWKVPGDLITKWQGIVRYWMRQRNLKWNYYMHYQITWAWYTMSRYVIPIGKHGEICVDLYWHLTPEQGWLSTYAVGIQYVSNLESKYRTELDPATADSIIHGHYFNCFKERAIQQALRGHRFVFCQFPEGHKSTGQVPSLQYLALLAHQNGLRERSKRGKTRRSRNLGSKQGAVGQMAKRYVTRSQPGGEAAFWERTPVPSMELLSGGRRKTWYSHDGKGLQIL</sequence>
<comment type="function">
    <text evidence="1">Counteracts the innate antiviral activity of APOBEC3G. Forms a complex with host APOBEC3G thus preventing the entry of this lethally hypermutating enzyme into progeny virions. Functions as an adapter molecule, recruiting APOBEC3G to the ubiquitin-proteasome machinery. Targets APOBEC3G for degradation through the assembly with elongin BC complex, CUL5 and RBX1. Binds viral RNA and affects the stability of viral nucleoprotein core. May play a role in viral morphology (By similarity).</text>
</comment>
<comment type="subunit">
    <text evidence="1">Homomultimer; in vitro and presumably in vivo. Interacts with viral Pr55Gag precursor and host APOBEC3G. The interaction between Vif and APOBEC3G is species-specific, which may play a role in restricting the replication of SIV to their host. Forms an E3 ligase complex by interacting with host CUL5 and elongin BC complex (ELOB and ELOC) (By similarity).</text>
</comment>
<comment type="subcellular location">
    <subcellularLocation>
        <location evidence="1">Host cytoplasm</location>
    </subcellularLocation>
    <subcellularLocation>
        <location evidence="1">Host cell membrane</location>
        <topology evidence="1">Peripheral membrane protein</topology>
        <orientation evidence="1">Cytoplasmic side</orientation>
    </subcellularLocation>
    <subcellularLocation>
        <location evidence="1">Virion</location>
    </subcellularLocation>
    <text evidence="1">Seems to colocalize with intermediate filament vimentin. A fraction is associated with the cytoplasmic side of cellular membranes, presumably via the interaction with Pr55Gag precursor (By similarity).</text>
</comment>
<comment type="induction">
    <text>Expressed late during infection in a Rev-dependent manner.</text>
</comment>
<comment type="domain">
    <text evidence="1">The BC-like-box motif mediates the interaction with elongin BC complex.</text>
</comment>
<comment type="domain">
    <text evidence="1">The HCCH motif (H-x(5)-C-x(18)-C-x(5)-H) mediates the interaction with CUL5.</text>
</comment>
<comment type="PTM">
    <text evidence="1">Processed in virion by the viral protease.</text>
</comment>
<comment type="PTM">
    <text evidence="1">Highly phosphorylated on serine and threonine residues.</text>
</comment>
<comment type="PTM">
    <text evidence="1">Polyubiquitinated and degraded by the proteasome in the presence of APOBEC3G.</text>
</comment>
<comment type="miscellaneous">
    <text>Vif-defective viruses show catastrophic failure in reverse transcription due to APOBEC-induced mutations that initiate a DNA base repair pathway and compromise the structural integrity of the ssDNA. In the absence of Vif, the virion is morphologically abnormal.</text>
</comment>
<comment type="miscellaneous">
    <text>This is an African green monkey isolate.</text>
</comment>
<comment type="similarity">
    <text evidence="3">Belongs to the primate lentivirus group Vif protein family.</text>
</comment>
<keyword id="KW-1032">Host cell membrane</keyword>
<keyword id="KW-1035">Host cytoplasm</keyword>
<keyword id="KW-1043">Host membrane</keyword>
<keyword id="KW-0945">Host-virus interaction</keyword>
<keyword id="KW-0472">Membrane</keyword>
<keyword id="KW-0597">Phosphoprotein</keyword>
<keyword id="KW-0832">Ubl conjugation</keyword>
<keyword id="KW-0833">Ubl conjugation pathway</keyword>
<keyword id="KW-0946">Virion</keyword>
<feature type="chain" id="PRO_0000085329" description="Virion infectivity factor">
    <location>
        <begin position="1"/>
        <end position="235"/>
    </location>
</feature>
<feature type="region of interest" description="Multimerization" evidence="1">
    <location>
        <begin position="157"/>
        <end position="169"/>
    </location>
</feature>
<feature type="region of interest" description="Disordered" evidence="2">
    <location>
        <begin position="164"/>
        <end position="188"/>
    </location>
</feature>
<feature type="short sequence motif" description="HCCH motif" evidence="1">
    <location>
        <begin position="112"/>
        <end position="142"/>
    </location>
</feature>
<feature type="short sequence motif" description="BC-box-like motif" evidence="1">
    <location>
        <begin position="150"/>
        <end position="159"/>
    </location>
</feature>
<feature type="compositionally biased region" description="Basic residues" evidence="2">
    <location>
        <begin position="166"/>
        <end position="176"/>
    </location>
</feature>
<feature type="modified residue" description="Phosphothreonine; by host" evidence="1">
    <location>
        <position position="100"/>
    </location>
</feature>
<feature type="modified residue" description="Phosphoserine; by host" evidence="1">
    <location>
        <position position="150"/>
    </location>
</feature>
<proteinExistence type="evidence at transcript level"/>
<dbReference type="EMBL" id="X07805">
    <property type="protein sequence ID" value="CAA30659.1"/>
    <property type="molecule type" value="Genomic_DNA"/>
</dbReference>
<dbReference type="SMR" id="P05904"/>
<dbReference type="GO" id="GO:0030430">
    <property type="term" value="C:host cell cytoplasm"/>
    <property type="evidence" value="ECO:0007669"/>
    <property type="project" value="UniProtKB-SubCell"/>
</dbReference>
<dbReference type="GO" id="GO:0020002">
    <property type="term" value="C:host cell plasma membrane"/>
    <property type="evidence" value="ECO:0007669"/>
    <property type="project" value="UniProtKB-SubCell"/>
</dbReference>
<dbReference type="GO" id="GO:0016020">
    <property type="term" value="C:membrane"/>
    <property type="evidence" value="ECO:0007669"/>
    <property type="project" value="UniProtKB-KW"/>
</dbReference>
<dbReference type="GO" id="GO:0044423">
    <property type="term" value="C:virion component"/>
    <property type="evidence" value="ECO:0007669"/>
    <property type="project" value="UniProtKB-KW"/>
</dbReference>
<dbReference type="GO" id="GO:0019058">
    <property type="term" value="P:viral life cycle"/>
    <property type="evidence" value="ECO:0007669"/>
    <property type="project" value="InterPro"/>
</dbReference>
<dbReference type="InterPro" id="IPR000475">
    <property type="entry name" value="Vif"/>
</dbReference>
<dbReference type="Pfam" id="PF00559">
    <property type="entry name" value="Vif"/>
    <property type="match status" value="1"/>
</dbReference>
<dbReference type="PRINTS" id="PR00349">
    <property type="entry name" value="VIRIONINFFCT"/>
</dbReference>
<organism>
    <name type="scientific">Simian immunodeficiency virus agm.vervet (isolate AGM TYO-1)</name>
    <name type="common">SIV-agm.ver</name>
    <name type="synonym">Simian immunodeficiency virus African green monkey vervet</name>
    <dbReference type="NCBI Taxonomy" id="11731"/>
    <lineage>
        <taxon>Viruses</taxon>
        <taxon>Riboviria</taxon>
        <taxon>Pararnavirae</taxon>
        <taxon>Artverviricota</taxon>
        <taxon>Revtraviricetes</taxon>
        <taxon>Ortervirales</taxon>
        <taxon>Retroviridae</taxon>
        <taxon>Orthoretrovirinae</taxon>
        <taxon>Lentivirus</taxon>
        <taxon>Simian immunodeficiency virus</taxon>
    </lineage>
</organism>
<name>VIF_SIVVT</name>
<reference key="1">
    <citation type="journal article" date="1988" name="Nature">
        <title>Sequence of simian immunodeficiency virus from African green monkey, a new member of the HIV/SIV group.</title>
        <authorList>
            <person name="Fukasawa M."/>
            <person name="Miura T."/>
            <person name="Hasegawa A."/>
            <person name="Morikawa S."/>
            <person name="Tsujimoto H."/>
            <person name="Miki K."/>
            <person name="Kitamura T."/>
            <person name="Hayami M."/>
        </authorList>
    </citation>
    <scope>NUCLEOTIDE SEQUENCE [GENOMIC DNA]</scope>
</reference>
<protein>
    <recommendedName>
        <fullName>Virion infectivity factor</fullName>
        <shortName>Vif</shortName>
    </recommendedName>
    <alternativeName>
        <fullName>Q protein</fullName>
    </alternativeName>
    <alternativeName>
        <fullName>SOR protein</fullName>
    </alternativeName>
</protein>
<evidence type="ECO:0000250" key="1"/>
<evidence type="ECO:0000256" key="2">
    <source>
        <dbReference type="SAM" id="MobiDB-lite"/>
    </source>
</evidence>
<evidence type="ECO:0000305" key="3"/>
<organismHost>
    <name type="scientific">Cercopithecidae</name>
    <name type="common">Old World monkeys</name>
    <dbReference type="NCBI Taxonomy" id="9527"/>
</organismHost>